<gene>
    <name type="ordered locus">Rsph17029_0317</name>
</gene>
<proteinExistence type="inferred from homology"/>
<organism>
    <name type="scientific">Cereibacter sphaeroides (strain ATCC 17029 / ATH 2.4.9)</name>
    <name type="common">Rhodobacter sphaeroides</name>
    <dbReference type="NCBI Taxonomy" id="349101"/>
    <lineage>
        <taxon>Bacteria</taxon>
        <taxon>Pseudomonadati</taxon>
        <taxon>Pseudomonadota</taxon>
        <taxon>Alphaproteobacteria</taxon>
        <taxon>Rhodobacterales</taxon>
        <taxon>Paracoccaceae</taxon>
        <taxon>Cereibacter</taxon>
    </lineage>
</organism>
<dbReference type="EMBL" id="CP000577">
    <property type="protein sequence ID" value="ABN75433.1"/>
    <property type="molecule type" value="Genomic_DNA"/>
</dbReference>
<dbReference type="SMR" id="A3PGG7"/>
<dbReference type="KEGG" id="rsh:Rsph17029_0317"/>
<dbReference type="HOGENOM" id="CLU_059558_0_0_5"/>
<dbReference type="GO" id="GO:0005524">
    <property type="term" value="F:ATP binding"/>
    <property type="evidence" value="ECO:0007669"/>
    <property type="project" value="UniProtKB-UniRule"/>
</dbReference>
<dbReference type="GO" id="GO:0005525">
    <property type="term" value="F:GTP binding"/>
    <property type="evidence" value="ECO:0007669"/>
    <property type="project" value="UniProtKB-UniRule"/>
</dbReference>
<dbReference type="Gene3D" id="3.40.50.300">
    <property type="entry name" value="P-loop containing nucleotide triphosphate hydrolases"/>
    <property type="match status" value="1"/>
</dbReference>
<dbReference type="HAMAP" id="MF_00636">
    <property type="entry name" value="RapZ_like"/>
    <property type="match status" value="1"/>
</dbReference>
<dbReference type="InterPro" id="IPR027417">
    <property type="entry name" value="P-loop_NTPase"/>
</dbReference>
<dbReference type="InterPro" id="IPR005337">
    <property type="entry name" value="RapZ-like"/>
</dbReference>
<dbReference type="InterPro" id="IPR053930">
    <property type="entry name" value="RapZ-like_N"/>
</dbReference>
<dbReference type="InterPro" id="IPR053931">
    <property type="entry name" value="RapZ_C"/>
</dbReference>
<dbReference type="NCBIfam" id="NF003828">
    <property type="entry name" value="PRK05416.1"/>
    <property type="match status" value="1"/>
</dbReference>
<dbReference type="PANTHER" id="PTHR30448">
    <property type="entry name" value="RNASE ADAPTER PROTEIN RAPZ"/>
    <property type="match status" value="1"/>
</dbReference>
<dbReference type="PANTHER" id="PTHR30448:SF0">
    <property type="entry name" value="RNASE ADAPTER PROTEIN RAPZ"/>
    <property type="match status" value="1"/>
</dbReference>
<dbReference type="Pfam" id="PF22740">
    <property type="entry name" value="PapZ_C"/>
    <property type="match status" value="1"/>
</dbReference>
<dbReference type="Pfam" id="PF03668">
    <property type="entry name" value="RapZ-like_N"/>
    <property type="match status" value="1"/>
</dbReference>
<dbReference type="PIRSF" id="PIRSF005052">
    <property type="entry name" value="P-loopkin"/>
    <property type="match status" value="1"/>
</dbReference>
<dbReference type="SUPFAM" id="SSF52540">
    <property type="entry name" value="P-loop containing nucleoside triphosphate hydrolases"/>
    <property type="match status" value="1"/>
</dbReference>
<protein>
    <recommendedName>
        <fullName evidence="1">Nucleotide-binding protein Rsph17029_0317</fullName>
    </recommendedName>
</protein>
<feature type="chain" id="PRO_1000056849" description="Nucleotide-binding protein Rsph17029_0317">
    <location>
        <begin position="1"/>
        <end position="302"/>
    </location>
</feature>
<feature type="binding site" evidence="1">
    <location>
        <begin position="15"/>
        <end position="22"/>
    </location>
    <ligand>
        <name>ATP</name>
        <dbReference type="ChEBI" id="CHEBI:30616"/>
    </ligand>
</feature>
<feature type="binding site" evidence="1">
    <location>
        <begin position="62"/>
        <end position="65"/>
    </location>
    <ligand>
        <name>GTP</name>
        <dbReference type="ChEBI" id="CHEBI:37565"/>
    </ligand>
</feature>
<evidence type="ECO:0000255" key="1">
    <source>
        <dbReference type="HAMAP-Rule" id="MF_00636"/>
    </source>
</evidence>
<sequence>MVEPVQEYRLVLVTGPSGAGRTTAINALEDMGYEVIDNLPLSFVPRLIEGPSIGRPIALGLDVRNRDFNATALIELIDRLTQDPRVALEVLYVDCSASELIRRYNQTRRRHPLAPAETPAEGVEREIDLLAPVRVRADHLIDTSEMSPHDLKAELSRWFDRGAATRLAVSVQSFSYKRGVPRGVDMIFDCRFLKNPYWVESLRTLDGREASVADYISSDPRFGPFFEKLRDLVLFLLPAQLEEGKAHLSLGFGCTGGQHRSVAVAELLGNALAEAGWPVSKRHRELERRAAAVLPTHQGEKA</sequence>
<keyword id="KW-0067">ATP-binding</keyword>
<keyword id="KW-0342">GTP-binding</keyword>
<keyword id="KW-0547">Nucleotide-binding</keyword>
<accession>A3PGG7</accession>
<name>Y317_CERS1</name>
<comment type="function">
    <text evidence="1">Displays ATPase and GTPase activities.</text>
</comment>
<comment type="similarity">
    <text evidence="1">Belongs to the RapZ-like family.</text>
</comment>
<reference key="1">
    <citation type="submission" date="2007-02" db="EMBL/GenBank/DDBJ databases">
        <title>Complete sequence of chromosome 1 of Rhodobacter sphaeroides ATCC 17029.</title>
        <authorList>
            <person name="Copeland A."/>
            <person name="Lucas S."/>
            <person name="Lapidus A."/>
            <person name="Barry K."/>
            <person name="Detter J.C."/>
            <person name="Glavina del Rio T."/>
            <person name="Hammon N."/>
            <person name="Israni S."/>
            <person name="Dalin E."/>
            <person name="Tice H."/>
            <person name="Pitluck S."/>
            <person name="Kiss H."/>
            <person name="Brettin T."/>
            <person name="Bruce D."/>
            <person name="Han C."/>
            <person name="Tapia R."/>
            <person name="Gilna P."/>
            <person name="Schmutz J."/>
            <person name="Larimer F."/>
            <person name="Land M."/>
            <person name="Hauser L."/>
            <person name="Kyrpides N."/>
            <person name="Mikhailova N."/>
            <person name="Richardson P."/>
            <person name="Mackenzie C."/>
            <person name="Choudhary M."/>
            <person name="Donohue T.J."/>
            <person name="Kaplan S."/>
        </authorList>
    </citation>
    <scope>NUCLEOTIDE SEQUENCE [LARGE SCALE GENOMIC DNA]</scope>
    <source>
        <strain>ATCC 17029 / ATH 2.4.9</strain>
    </source>
</reference>